<evidence type="ECO:0000255" key="1">
    <source>
        <dbReference type="HAMAP-Rule" id="MF_01347"/>
    </source>
</evidence>
<feature type="chain" id="PRO_1000055162" description="ATP synthase subunit beta">
    <location>
        <begin position="1"/>
        <end position="463"/>
    </location>
</feature>
<feature type="binding site" evidence="1">
    <location>
        <begin position="152"/>
        <end position="159"/>
    </location>
    <ligand>
        <name>ATP</name>
        <dbReference type="ChEBI" id="CHEBI:30616"/>
    </ligand>
</feature>
<proteinExistence type="inferred from homology"/>
<sequence length="463" mass="49865">MSTGTVVQVIGAVVDVEFPQDAVPQVYDALKITGEGACNGLVLEVQQQLGGGVVRTIAMGSSDGLRRGLEVVNSGSPISVPVGTATLGRIMNVLGEPIDEAGPIGEEERYVIHRAAPSYEDQSNTTELLETGIKVIDLVCPFAKGGKVGLFGGAGVGKTVNMMELINNIAKAHSGLSVFAGVGERTREGNDFYYEMKDSGVLDKVAMVYGQMNEPPGNRLRVALSGLTMAEKFRDEGRDVLLFVDNIYRYTLAGTEVSALLGRMPSAVGYQPTLAEEMGVLQERITSTKTGSITSVQAVYVPADDLTDPSPATTFAHLDATVVLSRQIASLGIYPAVDPLDSTSRQLDPLVVGQEHYDVANGVQTVLQRYKELKDIIAILGMDELSDDDKTTVFRARKIERFLSQPFFVAEVFTGSPGKYVSLKDTIRGFKGILNGEFDHLPEQAFYMVGSIDEVIEKANKKK</sequence>
<organism>
    <name type="scientific">Shewanella putrefaciens (strain CN-32 / ATCC BAA-453)</name>
    <dbReference type="NCBI Taxonomy" id="319224"/>
    <lineage>
        <taxon>Bacteria</taxon>
        <taxon>Pseudomonadati</taxon>
        <taxon>Pseudomonadota</taxon>
        <taxon>Gammaproteobacteria</taxon>
        <taxon>Alteromonadales</taxon>
        <taxon>Shewanellaceae</taxon>
        <taxon>Shewanella</taxon>
    </lineage>
</organism>
<reference key="1">
    <citation type="submission" date="2007-04" db="EMBL/GenBank/DDBJ databases">
        <title>Complete sequence of Shewanella putrefaciens CN-32.</title>
        <authorList>
            <consortium name="US DOE Joint Genome Institute"/>
            <person name="Copeland A."/>
            <person name="Lucas S."/>
            <person name="Lapidus A."/>
            <person name="Barry K."/>
            <person name="Detter J.C."/>
            <person name="Glavina del Rio T."/>
            <person name="Hammon N."/>
            <person name="Israni S."/>
            <person name="Dalin E."/>
            <person name="Tice H."/>
            <person name="Pitluck S."/>
            <person name="Chain P."/>
            <person name="Malfatti S."/>
            <person name="Shin M."/>
            <person name="Vergez L."/>
            <person name="Schmutz J."/>
            <person name="Larimer F."/>
            <person name="Land M."/>
            <person name="Hauser L."/>
            <person name="Kyrpides N."/>
            <person name="Mikhailova N."/>
            <person name="Romine M.F."/>
            <person name="Fredrickson J."/>
            <person name="Tiedje J."/>
            <person name="Richardson P."/>
        </authorList>
    </citation>
    <scope>NUCLEOTIDE SEQUENCE [LARGE SCALE GENOMIC DNA]</scope>
    <source>
        <strain>CN-32 / ATCC BAA-453</strain>
    </source>
</reference>
<name>ATPB_SHEPC</name>
<dbReference type="EC" id="7.1.2.2" evidence="1"/>
<dbReference type="EMBL" id="CP000681">
    <property type="protein sequence ID" value="ABP77661.1"/>
    <property type="molecule type" value="Genomic_DNA"/>
</dbReference>
<dbReference type="SMR" id="A4YCH8"/>
<dbReference type="STRING" id="319224.Sputcn32_3956"/>
<dbReference type="KEGG" id="spc:Sputcn32_3956"/>
<dbReference type="eggNOG" id="COG0055">
    <property type="taxonomic scope" value="Bacteria"/>
</dbReference>
<dbReference type="HOGENOM" id="CLU_022398_0_2_6"/>
<dbReference type="GO" id="GO:0005886">
    <property type="term" value="C:plasma membrane"/>
    <property type="evidence" value="ECO:0007669"/>
    <property type="project" value="UniProtKB-SubCell"/>
</dbReference>
<dbReference type="GO" id="GO:0045259">
    <property type="term" value="C:proton-transporting ATP synthase complex"/>
    <property type="evidence" value="ECO:0007669"/>
    <property type="project" value="UniProtKB-KW"/>
</dbReference>
<dbReference type="GO" id="GO:0005524">
    <property type="term" value="F:ATP binding"/>
    <property type="evidence" value="ECO:0007669"/>
    <property type="project" value="UniProtKB-UniRule"/>
</dbReference>
<dbReference type="GO" id="GO:0016887">
    <property type="term" value="F:ATP hydrolysis activity"/>
    <property type="evidence" value="ECO:0007669"/>
    <property type="project" value="InterPro"/>
</dbReference>
<dbReference type="GO" id="GO:0046933">
    <property type="term" value="F:proton-transporting ATP synthase activity, rotational mechanism"/>
    <property type="evidence" value="ECO:0007669"/>
    <property type="project" value="UniProtKB-UniRule"/>
</dbReference>
<dbReference type="CDD" id="cd18110">
    <property type="entry name" value="ATP-synt_F1_beta_C"/>
    <property type="match status" value="1"/>
</dbReference>
<dbReference type="CDD" id="cd18115">
    <property type="entry name" value="ATP-synt_F1_beta_N"/>
    <property type="match status" value="1"/>
</dbReference>
<dbReference type="CDD" id="cd01133">
    <property type="entry name" value="F1-ATPase_beta_CD"/>
    <property type="match status" value="1"/>
</dbReference>
<dbReference type="FunFam" id="1.10.1140.10:FF:000001">
    <property type="entry name" value="ATP synthase subunit beta"/>
    <property type="match status" value="1"/>
</dbReference>
<dbReference type="FunFam" id="2.40.10.170:FF:000003">
    <property type="entry name" value="ATP synthase subunit beta"/>
    <property type="match status" value="1"/>
</dbReference>
<dbReference type="FunFam" id="3.40.50.300:FF:000004">
    <property type="entry name" value="ATP synthase subunit beta"/>
    <property type="match status" value="1"/>
</dbReference>
<dbReference type="Gene3D" id="2.40.10.170">
    <property type="match status" value="1"/>
</dbReference>
<dbReference type="Gene3D" id="1.10.1140.10">
    <property type="entry name" value="Bovine Mitochondrial F1-atpase, Atp Synthase Beta Chain, Chain D, domain 3"/>
    <property type="match status" value="1"/>
</dbReference>
<dbReference type="Gene3D" id="3.40.50.300">
    <property type="entry name" value="P-loop containing nucleotide triphosphate hydrolases"/>
    <property type="match status" value="1"/>
</dbReference>
<dbReference type="HAMAP" id="MF_01347">
    <property type="entry name" value="ATP_synth_beta_bact"/>
    <property type="match status" value="1"/>
</dbReference>
<dbReference type="InterPro" id="IPR003593">
    <property type="entry name" value="AAA+_ATPase"/>
</dbReference>
<dbReference type="InterPro" id="IPR055190">
    <property type="entry name" value="ATP-synt_VA_C"/>
</dbReference>
<dbReference type="InterPro" id="IPR005722">
    <property type="entry name" value="ATP_synth_F1_bsu"/>
</dbReference>
<dbReference type="InterPro" id="IPR020003">
    <property type="entry name" value="ATPase_a/bsu_AS"/>
</dbReference>
<dbReference type="InterPro" id="IPR050053">
    <property type="entry name" value="ATPase_alpha/beta_chains"/>
</dbReference>
<dbReference type="InterPro" id="IPR004100">
    <property type="entry name" value="ATPase_F1/V1/A1_a/bsu_N"/>
</dbReference>
<dbReference type="InterPro" id="IPR036121">
    <property type="entry name" value="ATPase_F1/V1/A1_a/bsu_N_sf"/>
</dbReference>
<dbReference type="InterPro" id="IPR000194">
    <property type="entry name" value="ATPase_F1/V1/A1_a/bsu_nucl-bd"/>
</dbReference>
<dbReference type="InterPro" id="IPR024034">
    <property type="entry name" value="ATPase_F1/V1_b/a_C"/>
</dbReference>
<dbReference type="InterPro" id="IPR027417">
    <property type="entry name" value="P-loop_NTPase"/>
</dbReference>
<dbReference type="NCBIfam" id="TIGR01039">
    <property type="entry name" value="atpD"/>
    <property type="match status" value="1"/>
</dbReference>
<dbReference type="PANTHER" id="PTHR15184">
    <property type="entry name" value="ATP SYNTHASE"/>
    <property type="match status" value="1"/>
</dbReference>
<dbReference type="PANTHER" id="PTHR15184:SF71">
    <property type="entry name" value="ATP SYNTHASE SUBUNIT BETA, MITOCHONDRIAL"/>
    <property type="match status" value="1"/>
</dbReference>
<dbReference type="Pfam" id="PF00006">
    <property type="entry name" value="ATP-synt_ab"/>
    <property type="match status" value="1"/>
</dbReference>
<dbReference type="Pfam" id="PF02874">
    <property type="entry name" value="ATP-synt_ab_N"/>
    <property type="match status" value="1"/>
</dbReference>
<dbReference type="Pfam" id="PF22919">
    <property type="entry name" value="ATP-synt_VA_C"/>
    <property type="match status" value="1"/>
</dbReference>
<dbReference type="SMART" id="SM00382">
    <property type="entry name" value="AAA"/>
    <property type="match status" value="1"/>
</dbReference>
<dbReference type="SUPFAM" id="SSF47917">
    <property type="entry name" value="C-terminal domain of alpha and beta subunits of F1 ATP synthase"/>
    <property type="match status" value="1"/>
</dbReference>
<dbReference type="SUPFAM" id="SSF50615">
    <property type="entry name" value="N-terminal domain of alpha and beta subunits of F1 ATP synthase"/>
    <property type="match status" value="1"/>
</dbReference>
<dbReference type="SUPFAM" id="SSF52540">
    <property type="entry name" value="P-loop containing nucleoside triphosphate hydrolases"/>
    <property type="match status" value="1"/>
</dbReference>
<dbReference type="PROSITE" id="PS00152">
    <property type="entry name" value="ATPASE_ALPHA_BETA"/>
    <property type="match status" value="1"/>
</dbReference>
<gene>
    <name evidence="1" type="primary">atpD</name>
    <name type="ordered locus">Sputcn32_3956</name>
</gene>
<protein>
    <recommendedName>
        <fullName evidence="1">ATP synthase subunit beta</fullName>
        <ecNumber evidence="1">7.1.2.2</ecNumber>
    </recommendedName>
    <alternativeName>
        <fullName evidence="1">ATP synthase F1 sector subunit beta</fullName>
    </alternativeName>
    <alternativeName>
        <fullName evidence="1">F-ATPase subunit beta</fullName>
    </alternativeName>
</protein>
<keyword id="KW-0066">ATP synthesis</keyword>
<keyword id="KW-0067">ATP-binding</keyword>
<keyword id="KW-0997">Cell inner membrane</keyword>
<keyword id="KW-1003">Cell membrane</keyword>
<keyword id="KW-0139">CF(1)</keyword>
<keyword id="KW-0375">Hydrogen ion transport</keyword>
<keyword id="KW-0406">Ion transport</keyword>
<keyword id="KW-0472">Membrane</keyword>
<keyword id="KW-0547">Nucleotide-binding</keyword>
<keyword id="KW-1278">Translocase</keyword>
<keyword id="KW-0813">Transport</keyword>
<accession>A4YCH8</accession>
<comment type="function">
    <text evidence="1">Produces ATP from ADP in the presence of a proton gradient across the membrane. The catalytic sites are hosted primarily by the beta subunits.</text>
</comment>
<comment type="catalytic activity">
    <reaction evidence="1">
        <text>ATP + H2O + 4 H(+)(in) = ADP + phosphate + 5 H(+)(out)</text>
        <dbReference type="Rhea" id="RHEA:57720"/>
        <dbReference type="ChEBI" id="CHEBI:15377"/>
        <dbReference type="ChEBI" id="CHEBI:15378"/>
        <dbReference type="ChEBI" id="CHEBI:30616"/>
        <dbReference type="ChEBI" id="CHEBI:43474"/>
        <dbReference type="ChEBI" id="CHEBI:456216"/>
        <dbReference type="EC" id="7.1.2.2"/>
    </reaction>
</comment>
<comment type="subunit">
    <text evidence="1">F-type ATPases have 2 components, CF(1) - the catalytic core - and CF(0) - the membrane proton channel. CF(1) has five subunits: alpha(3), beta(3), gamma(1), delta(1), epsilon(1). CF(0) has three main subunits: a(1), b(2) and c(9-12). The alpha and beta chains form an alternating ring which encloses part of the gamma chain. CF(1) is attached to CF(0) by a central stalk formed by the gamma and epsilon chains, while a peripheral stalk is formed by the delta and b chains.</text>
</comment>
<comment type="subcellular location">
    <subcellularLocation>
        <location evidence="1">Cell inner membrane</location>
        <topology evidence="1">Peripheral membrane protein</topology>
    </subcellularLocation>
</comment>
<comment type="similarity">
    <text evidence="1">Belongs to the ATPase alpha/beta chains family.</text>
</comment>